<organism>
    <name type="scientific">Yersinia pestis (strain Pestoides F)</name>
    <dbReference type="NCBI Taxonomy" id="386656"/>
    <lineage>
        <taxon>Bacteria</taxon>
        <taxon>Pseudomonadati</taxon>
        <taxon>Pseudomonadota</taxon>
        <taxon>Gammaproteobacteria</taxon>
        <taxon>Enterobacterales</taxon>
        <taxon>Yersiniaceae</taxon>
        <taxon>Yersinia</taxon>
    </lineage>
</organism>
<gene>
    <name evidence="1" type="primary">tmk</name>
    <name type="ordered locus">YPDSF_1842</name>
</gene>
<comment type="function">
    <text evidence="1">Phosphorylation of dTMP to form dTDP in both de novo and salvage pathways of dTTP synthesis.</text>
</comment>
<comment type="catalytic activity">
    <reaction evidence="1">
        <text>dTMP + ATP = dTDP + ADP</text>
        <dbReference type="Rhea" id="RHEA:13517"/>
        <dbReference type="ChEBI" id="CHEBI:30616"/>
        <dbReference type="ChEBI" id="CHEBI:58369"/>
        <dbReference type="ChEBI" id="CHEBI:63528"/>
        <dbReference type="ChEBI" id="CHEBI:456216"/>
        <dbReference type="EC" id="2.7.4.9"/>
    </reaction>
</comment>
<comment type="similarity">
    <text evidence="1">Belongs to the thymidylate kinase family.</text>
</comment>
<sequence>MNSKFIVIEGLEGAGKTTTRDTVVAVLRAQGINDIVFTREPGGTPLAEKLRDLIKQGIDGEVLTDKAEVLMLYAARVQLVENVIKPALARGSWVVGDRHDLSSQAYQGGGRGIDSQLMASLRDTVLGEFRPDLTLYLDLPPAVGLARARARGELDRIEQESLAFFERTRARYLELAASDASIKTIDASQPIEQVSASISQALAQWLTNQEPV</sequence>
<protein>
    <recommendedName>
        <fullName evidence="1">Thymidylate kinase</fullName>
        <ecNumber evidence="1">2.7.4.9</ecNumber>
    </recommendedName>
    <alternativeName>
        <fullName evidence="1">dTMP kinase</fullName>
    </alternativeName>
</protein>
<feature type="chain" id="PRO_1000023319" description="Thymidylate kinase">
    <location>
        <begin position="1"/>
        <end position="212"/>
    </location>
</feature>
<feature type="binding site" evidence="1">
    <location>
        <begin position="10"/>
        <end position="17"/>
    </location>
    <ligand>
        <name>ATP</name>
        <dbReference type="ChEBI" id="CHEBI:30616"/>
    </ligand>
</feature>
<dbReference type="EC" id="2.7.4.9" evidence="1"/>
<dbReference type="EMBL" id="CP000668">
    <property type="protein sequence ID" value="ABP40227.1"/>
    <property type="molecule type" value="Genomic_DNA"/>
</dbReference>
<dbReference type="RefSeq" id="WP_002213082.1">
    <property type="nucleotide sequence ID" value="NZ_CP009715.1"/>
</dbReference>
<dbReference type="SMR" id="A4TLR5"/>
<dbReference type="GeneID" id="57976966"/>
<dbReference type="KEGG" id="ypp:YPDSF_1842"/>
<dbReference type="PATRIC" id="fig|386656.14.peg.3297"/>
<dbReference type="GO" id="GO:0005829">
    <property type="term" value="C:cytosol"/>
    <property type="evidence" value="ECO:0007669"/>
    <property type="project" value="TreeGrafter"/>
</dbReference>
<dbReference type="GO" id="GO:0005524">
    <property type="term" value="F:ATP binding"/>
    <property type="evidence" value="ECO:0007669"/>
    <property type="project" value="UniProtKB-UniRule"/>
</dbReference>
<dbReference type="GO" id="GO:0004798">
    <property type="term" value="F:dTMP kinase activity"/>
    <property type="evidence" value="ECO:0007669"/>
    <property type="project" value="UniProtKB-UniRule"/>
</dbReference>
<dbReference type="GO" id="GO:0006233">
    <property type="term" value="P:dTDP biosynthetic process"/>
    <property type="evidence" value="ECO:0007669"/>
    <property type="project" value="InterPro"/>
</dbReference>
<dbReference type="GO" id="GO:0006235">
    <property type="term" value="P:dTTP biosynthetic process"/>
    <property type="evidence" value="ECO:0007669"/>
    <property type="project" value="UniProtKB-UniRule"/>
</dbReference>
<dbReference type="GO" id="GO:0006227">
    <property type="term" value="P:dUDP biosynthetic process"/>
    <property type="evidence" value="ECO:0007669"/>
    <property type="project" value="TreeGrafter"/>
</dbReference>
<dbReference type="CDD" id="cd01672">
    <property type="entry name" value="TMPK"/>
    <property type="match status" value="1"/>
</dbReference>
<dbReference type="FunFam" id="3.40.50.300:FF:000321">
    <property type="entry name" value="Thymidylate kinase"/>
    <property type="match status" value="1"/>
</dbReference>
<dbReference type="Gene3D" id="3.40.50.300">
    <property type="entry name" value="P-loop containing nucleotide triphosphate hydrolases"/>
    <property type="match status" value="1"/>
</dbReference>
<dbReference type="HAMAP" id="MF_00165">
    <property type="entry name" value="Thymidylate_kinase"/>
    <property type="match status" value="1"/>
</dbReference>
<dbReference type="InterPro" id="IPR027417">
    <property type="entry name" value="P-loop_NTPase"/>
</dbReference>
<dbReference type="InterPro" id="IPR039430">
    <property type="entry name" value="Thymidylate_kin-like_dom"/>
</dbReference>
<dbReference type="InterPro" id="IPR018095">
    <property type="entry name" value="Thymidylate_kin_CS"/>
</dbReference>
<dbReference type="InterPro" id="IPR018094">
    <property type="entry name" value="Thymidylate_kinase"/>
</dbReference>
<dbReference type="NCBIfam" id="TIGR00041">
    <property type="entry name" value="DTMP_kinase"/>
    <property type="match status" value="1"/>
</dbReference>
<dbReference type="PANTHER" id="PTHR10344">
    <property type="entry name" value="THYMIDYLATE KINASE"/>
    <property type="match status" value="1"/>
</dbReference>
<dbReference type="PANTHER" id="PTHR10344:SF4">
    <property type="entry name" value="UMP-CMP KINASE 2, MITOCHONDRIAL"/>
    <property type="match status" value="1"/>
</dbReference>
<dbReference type="Pfam" id="PF02223">
    <property type="entry name" value="Thymidylate_kin"/>
    <property type="match status" value="1"/>
</dbReference>
<dbReference type="SUPFAM" id="SSF52540">
    <property type="entry name" value="P-loop containing nucleoside triphosphate hydrolases"/>
    <property type="match status" value="1"/>
</dbReference>
<dbReference type="PROSITE" id="PS01331">
    <property type="entry name" value="THYMIDYLATE_KINASE"/>
    <property type="match status" value="1"/>
</dbReference>
<name>KTHY_YERPP</name>
<proteinExistence type="inferred from homology"/>
<evidence type="ECO:0000255" key="1">
    <source>
        <dbReference type="HAMAP-Rule" id="MF_00165"/>
    </source>
</evidence>
<reference key="1">
    <citation type="submission" date="2007-02" db="EMBL/GenBank/DDBJ databases">
        <title>Complete sequence of chromosome of Yersinia pestis Pestoides F.</title>
        <authorList>
            <consortium name="US DOE Joint Genome Institute"/>
            <person name="Copeland A."/>
            <person name="Lucas S."/>
            <person name="Lapidus A."/>
            <person name="Barry K."/>
            <person name="Detter J.C."/>
            <person name="Glavina del Rio T."/>
            <person name="Hammon N."/>
            <person name="Israni S."/>
            <person name="Dalin E."/>
            <person name="Tice H."/>
            <person name="Pitluck S."/>
            <person name="Di Bartolo G."/>
            <person name="Chain P."/>
            <person name="Malfatti S."/>
            <person name="Shin M."/>
            <person name="Vergez L."/>
            <person name="Schmutz J."/>
            <person name="Larimer F."/>
            <person name="Land M."/>
            <person name="Hauser L."/>
            <person name="Worsham P."/>
            <person name="Chu M."/>
            <person name="Bearden S."/>
            <person name="Garcia E."/>
            <person name="Richardson P."/>
        </authorList>
    </citation>
    <scope>NUCLEOTIDE SEQUENCE [LARGE SCALE GENOMIC DNA]</scope>
    <source>
        <strain>Pestoides F</strain>
    </source>
</reference>
<keyword id="KW-0067">ATP-binding</keyword>
<keyword id="KW-0418">Kinase</keyword>
<keyword id="KW-0545">Nucleotide biosynthesis</keyword>
<keyword id="KW-0547">Nucleotide-binding</keyword>
<keyword id="KW-0808">Transferase</keyword>
<accession>A4TLR5</accession>